<protein>
    <recommendedName>
        <fullName evidence="1">Transcriptional repressor FrmR</fullName>
    </recommendedName>
</protein>
<organism>
    <name type="scientific">Shigella sonnei (strain Ss046)</name>
    <dbReference type="NCBI Taxonomy" id="300269"/>
    <lineage>
        <taxon>Bacteria</taxon>
        <taxon>Pseudomonadati</taxon>
        <taxon>Pseudomonadota</taxon>
        <taxon>Gammaproteobacteria</taxon>
        <taxon>Enterobacterales</taxon>
        <taxon>Enterobacteriaceae</taxon>
        <taxon>Shigella</taxon>
    </lineage>
</organism>
<gene>
    <name evidence="1" type="primary">frmR</name>
    <name type="ordered locus">SSON_0336</name>
</gene>
<keyword id="KW-0963">Cytoplasm</keyword>
<keyword id="KW-0238">DNA-binding</keyword>
<keyword id="KW-1185">Reference proteome</keyword>
<keyword id="KW-0678">Repressor</keyword>
<keyword id="KW-0804">Transcription</keyword>
<keyword id="KW-0805">Transcription regulation</keyword>
<sequence>MPSTPEEKKKVLTRVRRIRGQIDALERSLEGDAECRAILQQIAAVRGAANGLMAEVLESHIRETFDRNDCYSREVSQSVDDTIELVRAYLK</sequence>
<proteinExistence type="inferred from homology"/>
<dbReference type="EMBL" id="CP000038">
    <property type="protein sequence ID" value="AAZ87113.1"/>
    <property type="status" value="ALT_INIT"/>
    <property type="molecule type" value="Genomic_DNA"/>
</dbReference>
<dbReference type="RefSeq" id="WP_001141271.1">
    <property type="nucleotide sequence ID" value="NC_007384.1"/>
</dbReference>
<dbReference type="SMR" id="Q3Z549"/>
<dbReference type="GeneID" id="93777098"/>
<dbReference type="KEGG" id="ssn:SSON_0336"/>
<dbReference type="HOGENOM" id="CLU_130332_3_0_6"/>
<dbReference type="Proteomes" id="UP000002529">
    <property type="component" value="Chromosome"/>
</dbReference>
<dbReference type="GO" id="GO:0005737">
    <property type="term" value="C:cytoplasm"/>
    <property type="evidence" value="ECO:0007669"/>
    <property type="project" value="UniProtKB-SubCell"/>
</dbReference>
<dbReference type="GO" id="GO:0003677">
    <property type="term" value="F:DNA binding"/>
    <property type="evidence" value="ECO:0007669"/>
    <property type="project" value="UniProtKB-KW"/>
</dbReference>
<dbReference type="GO" id="GO:0046872">
    <property type="term" value="F:metal ion binding"/>
    <property type="evidence" value="ECO:0007669"/>
    <property type="project" value="InterPro"/>
</dbReference>
<dbReference type="GO" id="GO:0045892">
    <property type="term" value="P:negative regulation of DNA-templated transcription"/>
    <property type="evidence" value="ECO:0007669"/>
    <property type="project" value="UniProtKB-ARBA"/>
</dbReference>
<dbReference type="CDD" id="cd10153">
    <property type="entry name" value="RcnR-FrmR-like_DUF156"/>
    <property type="match status" value="1"/>
</dbReference>
<dbReference type="FunFam" id="1.20.58.1000:FF:000002">
    <property type="entry name" value="Transcriptional repressor FrmR"/>
    <property type="match status" value="1"/>
</dbReference>
<dbReference type="Gene3D" id="1.20.58.1000">
    <property type="entry name" value="Metal-sensitive repressor, helix protomer"/>
    <property type="match status" value="1"/>
</dbReference>
<dbReference type="InterPro" id="IPR003735">
    <property type="entry name" value="Metal_Tscrpt_repr"/>
</dbReference>
<dbReference type="InterPro" id="IPR038390">
    <property type="entry name" value="Metal_Tscrpt_repr_sf"/>
</dbReference>
<dbReference type="NCBIfam" id="NF008464">
    <property type="entry name" value="PRK11352.1"/>
    <property type="match status" value="1"/>
</dbReference>
<dbReference type="PANTHER" id="PTHR33677:SF5">
    <property type="entry name" value="TRANSCRIPTIONAL REPRESSOR FRMR"/>
    <property type="match status" value="1"/>
</dbReference>
<dbReference type="PANTHER" id="PTHR33677">
    <property type="entry name" value="TRANSCRIPTIONAL REPRESSOR FRMR-RELATED"/>
    <property type="match status" value="1"/>
</dbReference>
<dbReference type="Pfam" id="PF02583">
    <property type="entry name" value="Trns_repr_metal"/>
    <property type="match status" value="1"/>
</dbReference>
<accession>Q3Z549</accession>
<feature type="chain" id="PRO_0000340128" description="Transcriptional repressor FrmR">
    <location>
        <begin position="1"/>
        <end position="91"/>
    </location>
</feature>
<feature type="site" description="Important for response to formaldehyde" evidence="1">
    <location>
        <position position="2"/>
    </location>
</feature>
<feature type="site" description="Important for response to formaldehyde" evidence="1">
    <location>
        <position position="35"/>
    </location>
</feature>
<evidence type="ECO:0000250" key="1">
    <source>
        <dbReference type="UniProtKB" id="P0AAP3"/>
    </source>
</evidence>
<evidence type="ECO:0000305" key="2"/>
<reference key="1">
    <citation type="journal article" date="2005" name="Nucleic Acids Res.">
        <title>Genome dynamics and diversity of Shigella species, the etiologic agents of bacillary dysentery.</title>
        <authorList>
            <person name="Yang F."/>
            <person name="Yang J."/>
            <person name="Zhang X."/>
            <person name="Chen L."/>
            <person name="Jiang Y."/>
            <person name="Yan Y."/>
            <person name="Tang X."/>
            <person name="Wang J."/>
            <person name="Xiong Z."/>
            <person name="Dong J."/>
            <person name="Xue Y."/>
            <person name="Zhu Y."/>
            <person name="Xu X."/>
            <person name="Sun L."/>
            <person name="Chen S."/>
            <person name="Nie H."/>
            <person name="Peng J."/>
            <person name="Xu J."/>
            <person name="Wang Y."/>
            <person name="Yuan Z."/>
            <person name="Wen Y."/>
            <person name="Yao Z."/>
            <person name="Shen Y."/>
            <person name="Qiang B."/>
            <person name="Hou Y."/>
            <person name="Yu J."/>
            <person name="Jin Q."/>
        </authorList>
    </citation>
    <scope>NUCLEOTIDE SEQUENCE [LARGE SCALE GENOMIC DNA]</scope>
    <source>
        <strain>Ss046</strain>
    </source>
</reference>
<name>FRMR_SHISS</name>
<comment type="function">
    <text evidence="1">Formaldehyde sensor. In the absence of formaldehyde, mediates repression of the frmRAB operon. Acts by binding directly to the frmRAB promoter region. In the presence of formaldehyde, it dissociates from the frmRAB promoter region and allows expression of the formaldehyde detoxification system encoded by frmA and frmB.</text>
</comment>
<comment type="subunit">
    <text evidence="1">Homotetramer.</text>
</comment>
<comment type="subcellular location">
    <subcellularLocation>
        <location evidence="1">Cytoplasm</location>
    </subcellularLocation>
</comment>
<comment type="similarity">
    <text evidence="2">Belongs to the FrmR/RcnR family.</text>
</comment>
<comment type="sequence caution" evidence="2">
    <conflict type="erroneous initiation">
        <sequence resource="EMBL-CDS" id="AAZ87113"/>
    </conflict>
    <text>Extended N-terminus.</text>
</comment>